<reference key="1">
    <citation type="submission" date="1991-12" db="EMBL/GenBank/DDBJ databases">
        <authorList>
            <person name="Arief L."/>
            <person name="Entsch B."/>
            <person name="Wicks R.E."/>
        </authorList>
    </citation>
    <scope>NUCLEOTIDE SEQUENCE [GENOMIC DNA]</scope>
    <source>
        <strain>cv. Banjo</strain>
    </source>
</reference>
<sequence length="47" mass="5170">MIQPQTHLNVADNSGARELMCIRILGASNRRYAYIGDIVVAVIKQAV</sequence>
<dbReference type="EMBL" id="M80799">
    <property type="protein sequence ID" value="AAA84719.1"/>
    <property type="molecule type" value="Genomic_DNA"/>
</dbReference>
<dbReference type="PIR" id="T09651">
    <property type="entry name" value="T09651"/>
</dbReference>
<dbReference type="SMR" id="P26820"/>
<dbReference type="GO" id="GO:0009507">
    <property type="term" value="C:chloroplast"/>
    <property type="evidence" value="ECO:0007669"/>
    <property type="project" value="UniProtKB-SubCell"/>
</dbReference>
<dbReference type="GO" id="GO:0022625">
    <property type="term" value="C:cytosolic large ribosomal subunit"/>
    <property type="evidence" value="ECO:0007669"/>
    <property type="project" value="TreeGrafter"/>
</dbReference>
<dbReference type="GO" id="GO:0070180">
    <property type="term" value="F:large ribosomal subunit rRNA binding"/>
    <property type="evidence" value="ECO:0007669"/>
    <property type="project" value="TreeGrafter"/>
</dbReference>
<dbReference type="GO" id="GO:0003735">
    <property type="term" value="F:structural constituent of ribosome"/>
    <property type="evidence" value="ECO:0007669"/>
    <property type="project" value="InterPro"/>
</dbReference>
<dbReference type="GO" id="GO:0006412">
    <property type="term" value="P:translation"/>
    <property type="evidence" value="ECO:0007669"/>
    <property type="project" value="InterPro"/>
</dbReference>
<dbReference type="CDD" id="cd00337">
    <property type="entry name" value="Ribosomal_uL14"/>
    <property type="match status" value="1"/>
</dbReference>
<dbReference type="Gene3D" id="2.40.150.20">
    <property type="entry name" value="Ribosomal protein L14"/>
    <property type="match status" value="1"/>
</dbReference>
<dbReference type="InterPro" id="IPR000218">
    <property type="entry name" value="Ribosomal_uL14"/>
</dbReference>
<dbReference type="InterPro" id="IPR036853">
    <property type="entry name" value="Ribosomal_uL14_sf"/>
</dbReference>
<dbReference type="PANTHER" id="PTHR11761">
    <property type="entry name" value="50S/60S RIBOSOMAL PROTEIN L14/L23"/>
    <property type="match status" value="1"/>
</dbReference>
<dbReference type="PANTHER" id="PTHR11761:SF27">
    <property type="entry name" value="LARGE RIBOSOMAL SUBUNIT PROTEIN UL14C"/>
    <property type="match status" value="1"/>
</dbReference>
<dbReference type="Pfam" id="PF00238">
    <property type="entry name" value="Ribosomal_L14"/>
    <property type="match status" value="1"/>
</dbReference>
<dbReference type="SMART" id="SM01374">
    <property type="entry name" value="Ribosomal_L14"/>
    <property type="match status" value="1"/>
</dbReference>
<dbReference type="SUPFAM" id="SSF50193">
    <property type="entry name" value="Ribosomal protein L14"/>
    <property type="match status" value="1"/>
</dbReference>
<keyword id="KW-0150">Chloroplast</keyword>
<keyword id="KW-0934">Plastid</keyword>
<keyword id="KW-0687">Ribonucleoprotein</keyword>
<keyword id="KW-0689">Ribosomal protein</keyword>
<keyword id="KW-0694">RNA-binding</keyword>
<keyword id="KW-0699">rRNA-binding</keyword>
<gene>
    <name type="primary">rpl14</name>
</gene>
<accession>P26820</accession>
<proteinExistence type="inferred from homology"/>
<comment type="function">
    <text evidence="1">Binds to 23S rRNA.</text>
</comment>
<comment type="subunit">
    <text evidence="1">Part of the 50S ribosomal subunit.</text>
</comment>
<comment type="subcellular location">
    <subcellularLocation>
        <location>Plastid</location>
        <location>Chloroplast</location>
    </subcellularLocation>
</comment>
<comment type="similarity">
    <text evidence="2">Belongs to the universal ribosomal protein uL14 family.</text>
</comment>
<protein>
    <recommendedName>
        <fullName evidence="2">Large ribosomal subunit protein uL14c</fullName>
    </recommendedName>
    <alternativeName>
        <fullName>50S ribosomal protein L14, chloroplastic</fullName>
    </alternativeName>
</protein>
<name>RK14_VIGUN</name>
<feature type="chain" id="PRO_0000128602" description="Large ribosomal subunit protein uL14c">
    <location>
        <begin position="1"/>
        <end position="47" status="greater than"/>
    </location>
</feature>
<feature type="non-terminal residue">
    <location>
        <position position="47"/>
    </location>
</feature>
<organism>
    <name type="scientific">Vigna unguiculata</name>
    <name type="common">Cowpea</name>
    <dbReference type="NCBI Taxonomy" id="3917"/>
    <lineage>
        <taxon>Eukaryota</taxon>
        <taxon>Viridiplantae</taxon>
        <taxon>Streptophyta</taxon>
        <taxon>Embryophyta</taxon>
        <taxon>Tracheophyta</taxon>
        <taxon>Spermatophyta</taxon>
        <taxon>Magnoliopsida</taxon>
        <taxon>eudicotyledons</taxon>
        <taxon>Gunneridae</taxon>
        <taxon>Pentapetalae</taxon>
        <taxon>rosids</taxon>
        <taxon>fabids</taxon>
        <taxon>Fabales</taxon>
        <taxon>Fabaceae</taxon>
        <taxon>Papilionoideae</taxon>
        <taxon>50 kb inversion clade</taxon>
        <taxon>NPAAA clade</taxon>
        <taxon>indigoferoid/millettioid clade</taxon>
        <taxon>Phaseoleae</taxon>
        <taxon>Vigna</taxon>
    </lineage>
</organism>
<evidence type="ECO:0000250" key="1"/>
<evidence type="ECO:0000305" key="2"/>
<geneLocation type="chloroplast"/>